<evidence type="ECO:0000255" key="1"/>
<evidence type="ECO:0000255" key="2">
    <source>
        <dbReference type="PROSITE-ProRule" id="PRU01034"/>
    </source>
</evidence>
<evidence type="ECO:0000269" key="3">
    <source>
    </source>
</evidence>
<evidence type="ECO:0000303" key="4">
    <source>
    </source>
</evidence>
<evidence type="ECO:0000305" key="5"/>
<evidence type="ECO:0000312" key="6">
    <source>
        <dbReference type="EMBL" id="AAP50990.1"/>
    </source>
</evidence>
<evidence type="ECO:0000312" key="7">
    <source>
        <dbReference type="EMBL" id="ABF97977.1"/>
    </source>
</evidence>
<evidence type="ECO:0000312" key="8">
    <source>
        <dbReference type="EMBL" id="BAF12727.1"/>
    </source>
</evidence>
<accession>Q10FT0</accession>
<accession>Q7Y097</accession>
<name>PUB24_ORYSJ</name>
<gene>
    <name evidence="4" type="primary">PUB24</name>
    <name evidence="8" type="ordered locus">Os03g0657100</name>
    <name evidence="7" type="ordered locus">LOC_Os03g45420</name>
    <name evidence="6" type="ORF">OSJNBa0075A22.19</name>
</gene>
<organism>
    <name type="scientific">Oryza sativa subsp. japonica</name>
    <name type="common">Rice</name>
    <dbReference type="NCBI Taxonomy" id="39947"/>
    <lineage>
        <taxon>Eukaryota</taxon>
        <taxon>Viridiplantae</taxon>
        <taxon>Streptophyta</taxon>
        <taxon>Embryophyta</taxon>
        <taxon>Tracheophyta</taxon>
        <taxon>Spermatophyta</taxon>
        <taxon>Magnoliopsida</taxon>
        <taxon>Liliopsida</taxon>
        <taxon>Poales</taxon>
        <taxon>Poaceae</taxon>
        <taxon>BOP clade</taxon>
        <taxon>Oryzoideae</taxon>
        <taxon>Oryzeae</taxon>
        <taxon>Oryzinae</taxon>
        <taxon>Oryza</taxon>
        <taxon>Oryza sativa</taxon>
    </lineage>
</organism>
<reference key="1">
    <citation type="journal article" date="2005" name="Genome Res.">
        <title>Sequence, annotation, and analysis of synteny between rice chromosome 3 and diverged grass species.</title>
        <authorList>
            <consortium name="The rice chromosome 3 sequencing consortium"/>
            <person name="Buell C.R."/>
            <person name="Yuan Q."/>
            <person name="Ouyang S."/>
            <person name="Liu J."/>
            <person name="Zhu W."/>
            <person name="Wang A."/>
            <person name="Maiti R."/>
            <person name="Haas B."/>
            <person name="Wortman J."/>
            <person name="Pertea M."/>
            <person name="Jones K.M."/>
            <person name="Kim M."/>
            <person name="Overton L."/>
            <person name="Tsitrin T."/>
            <person name="Fadrosh D."/>
            <person name="Bera J."/>
            <person name="Weaver B."/>
            <person name="Jin S."/>
            <person name="Johri S."/>
            <person name="Reardon M."/>
            <person name="Webb K."/>
            <person name="Hill J."/>
            <person name="Moffat K."/>
            <person name="Tallon L."/>
            <person name="Van Aken S."/>
            <person name="Lewis M."/>
            <person name="Utterback T."/>
            <person name="Feldblyum T."/>
            <person name="Zismann V."/>
            <person name="Iobst S."/>
            <person name="Hsiao J."/>
            <person name="de Vazeille A.R."/>
            <person name="Salzberg S.L."/>
            <person name="White O."/>
            <person name="Fraser C.M."/>
            <person name="Yu Y."/>
            <person name="Kim H."/>
            <person name="Rambo T."/>
            <person name="Currie J."/>
            <person name="Collura K."/>
            <person name="Kernodle-Thompson S."/>
            <person name="Wei F."/>
            <person name="Kudrna K."/>
            <person name="Ammiraju J.S.S."/>
            <person name="Luo M."/>
            <person name="Goicoechea J.L."/>
            <person name="Wing R.A."/>
            <person name="Henry D."/>
            <person name="Oates R."/>
            <person name="Palmer M."/>
            <person name="Pries G."/>
            <person name="Saski C."/>
            <person name="Simmons J."/>
            <person name="Soderlund C."/>
            <person name="Nelson W."/>
            <person name="de la Bastide M."/>
            <person name="Spiegel L."/>
            <person name="Nascimento L."/>
            <person name="Huang E."/>
            <person name="Preston R."/>
            <person name="Zutavern T."/>
            <person name="Palmer L."/>
            <person name="O'Shaughnessy A."/>
            <person name="Dike S."/>
            <person name="McCombie W.R."/>
            <person name="Minx P."/>
            <person name="Cordum H."/>
            <person name="Wilson R."/>
            <person name="Jin W."/>
            <person name="Lee H.R."/>
            <person name="Jiang J."/>
            <person name="Jackson S."/>
        </authorList>
    </citation>
    <scope>NUCLEOTIDE SEQUENCE [LARGE SCALE GENOMIC DNA]</scope>
    <source>
        <strain>cv. Nipponbare</strain>
    </source>
</reference>
<reference key="2">
    <citation type="journal article" date="2005" name="Nature">
        <title>The map-based sequence of the rice genome.</title>
        <authorList>
            <consortium name="International rice genome sequencing project (IRGSP)"/>
        </authorList>
    </citation>
    <scope>NUCLEOTIDE SEQUENCE [LARGE SCALE GENOMIC DNA]</scope>
    <source>
        <strain>cv. Nipponbare</strain>
    </source>
</reference>
<reference key="3">
    <citation type="journal article" date="2008" name="Nucleic Acids Res.">
        <title>The rice annotation project database (RAP-DB): 2008 update.</title>
        <authorList>
            <consortium name="The rice annotation project (RAP)"/>
        </authorList>
    </citation>
    <scope>GENOME REANNOTATION</scope>
    <source>
        <strain>cv. Nipponbare</strain>
    </source>
</reference>
<reference key="4">
    <citation type="journal article" date="2013" name="Rice">
        <title>Improvement of the Oryza sativa Nipponbare reference genome using next generation sequence and optical map data.</title>
        <authorList>
            <person name="Kawahara Y."/>
            <person name="de la Bastide M."/>
            <person name="Hamilton J.P."/>
            <person name="Kanamori H."/>
            <person name="McCombie W.R."/>
            <person name="Ouyang S."/>
            <person name="Schwartz D.C."/>
            <person name="Tanaka T."/>
            <person name="Wu J."/>
            <person name="Zhou S."/>
            <person name="Childs K.L."/>
            <person name="Davidson R.M."/>
            <person name="Lin H."/>
            <person name="Quesada-Ocampo L."/>
            <person name="Vaillancourt B."/>
            <person name="Sakai H."/>
            <person name="Lee S.S."/>
            <person name="Kim J."/>
            <person name="Numa H."/>
            <person name="Itoh T."/>
            <person name="Buell C.R."/>
            <person name="Matsumoto T."/>
        </authorList>
    </citation>
    <scope>GENOME REANNOTATION</scope>
    <source>
        <strain>cv. Nipponbare</strain>
    </source>
</reference>
<reference key="5">
    <citation type="journal article" date="2019" name="Plant J.">
        <title>OsBZR1 turnover mediated by OsSK22-regulated U-box E3 ligase OsPUB24 in rice BR response.</title>
        <authorList>
            <person name="Min H.J."/>
            <person name="Cui L.H."/>
            <person name="Oh T.R."/>
            <person name="Kim J.H."/>
            <person name="Kim T.W."/>
            <person name="Kim W.T."/>
        </authorList>
    </citation>
    <scope>FUNCTION</scope>
    <scope>CATALYTIC ACTIVITY</scope>
    <scope>INTERACTION WITH BZR1; BZR2; BZR3 AND GSK2</scope>
    <scope>SUBCELLULAR LOCATION</scope>
    <scope>DISRUPTION PHENOTYPE</scope>
    <scope>AUTOUBIQUITINATION</scope>
    <scope>PHOSPHORYLATION</scope>
    <scope>MUTAGENESIS OF CYS-20</scope>
</reference>
<proteinExistence type="evidence at protein level"/>
<dbReference type="EC" id="2.3.2.27" evidence="3"/>
<dbReference type="EMBL" id="AC133859">
    <property type="protein sequence ID" value="AAP50990.1"/>
    <property type="status" value="ALT_SEQ"/>
    <property type="molecule type" value="Genomic_DNA"/>
</dbReference>
<dbReference type="EMBL" id="DP000009">
    <property type="protein sequence ID" value="ABF97977.1"/>
    <property type="molecule type" value="Genomic_DNA"/>
</dbReference>
<dbReference type="EMBL" id="AP008209">
    <property type="protein sequence ID" value="BAF12727.1"/>
    <property type="molecule type" value="Genomic_DNA"/>
</dbReference>
<dbReference type="EMBL" id="AP014959">
    <property type="protein sequence ID" value="BAS85568.1"/>
    <property type="molecule type" value="Genomic_DNA"/>
</dbReference>
<dbReference type="RefSeq" id="XP_015631680.1">
    <property type="nucleotide sequence ID" value="XM_015776194.1"/>
</dbReference>
<dbReference type="SMR" id="Q10FT0"/>
<dbReference type="FunCoup" id="Q10FT0">
    <property type="interactions" value="1"/>
</dbReference>
<dbReference type="STRING" id="39947.Q10FT0"/>
<dbReference type="PaxDb" id="39947-Q10FT0"/>
<dbReference type="EnsemblPlants" id="Os03t0657100-01">
    <property type="protein sequence ID" value="Os03t0657100-01"/>
    <property type="gene ID" value="Os03g0657100"/>
</dbReference>
<dbReference type="Gramene" id="Os03t0657100-01">
    <property type="protein sequence ID" value="Os03t0657100-01"/>
    <property type="gene ID" value="Os03g0657100"/>
</dbReference>
<dbReference type="KEGG" id="dosa:Os03g0657100"/>
<dbReference type="eggNOG" id="KOG0167">
    <property type="taxonomic scope" value="Eukaryota"/>
</dbReference>
<dbReference type="HOGENOM" id="CLU_004912_0_0_1"/>
<dbReference type="InParanoid" id="Q10FT0"/>
<dbReference type="OMA" id="TGFACAC"/>
<dbReference type="OrthoDB" id="10064100at2759"/>
<dbReference type="UniPathway" id="UPA00143"/>
<dbReference type="Proteomes" id="UP000000763">
    <property type="component" value="Chromosome 3"/>
</dbReference>
<dbReference type="Proteomes" id="UP000059680">
    <property type="component" value="Chromosome 3"/>
</dbReference>
<dbReference type="ExpressionAtlas" id="Q10FT0">
    <property type="expression patterns" value="baseline and differential"/>
</dbReference>
<dbReference type="GO" id="GO:0005829">
    <property type="term" value="C:cytosol"/>
    <property type="evidence" value="ECO:0007669"/>
    <property type="project" value="UniProtKB-SubCell"/>
</dbReference>
<dbReference type="GO" id="GO:0005634">
    <property type="term" value="C:nucleus"/>
    <property type="evidence" value="ECO:0007669"/>
    <property type="project" value="UniProtKB-SubCell"/>
</dbReference>
<dbReference type="GO" id="GO:0004842">
    <property type="term" value="F:ubiquitin-protein transferase activity"/>
    <property type="evidence" value="ECO:0007669"/>
    <property type="project" value="InterPro"/>
</dbReference>
<dbReference type="GO" id="GO:0009742">
    <property type="term" value="P:brassinosteroid mediated signaling pathway"/>
    <property type="evidence" value="ECO:0007669"/>
    <property type="project" value="UniProtKB-KW"/>
</dbReference>
<dbReference type="GO" id="GO:0016567">
    <property type="term" value="P:protein ubiquitination"/>
    <property type="evidence" value="ECO:0007669"/>
    <property type="project" value="UniProtKB-UniPathway"/>
</dbReference>
<dbReference type="CDD" id="cd16664">
    <property type="entry name" value="RING-Ubox_PUB"/>
    <property type="match status" value="1"/>
</dbReference>
<dbReference type="Gene3D" id="1.25.10.10">
    <property type="entry name" value="Leucine-rich Repeat Variant"/>
    <property type="match status" value="3"/>
</dbReference>
<dbReference type="Gene3D" id="3.30.40.10">
    <property type="entry name" value="Zinc/RING finger domain, C3HC4 (zinc finger)"/>
    <property type="match status" value="1"/>
</dbReference>
<dbReference type="InterPro" id="IPR011989">
    <property type="entry name" value="ARM-like"/>
</dbReference>
<dbReference type="InterPro" id="IPR016024">
    <property type="entry name" value="ARM-type_fold"/>
</dbReference>
<dbReference type="InterPro" id="IPR000225">
    <property type="entry name" value="Armadillo"/>
</dbReference>
<dbReference type="InterPro" id="IPR045210">
    <property type="entry name" value="RING-Ubox_PUB"/>
</dbReference>
<dbReference type="InterPro" id="IPR052608">
    <property type="entry name" value="U-box_domain_protein"/>
</dbReference>
<dbReference type="InterPro" id="IPR003613">
    <property type="entry name" value="Ubox_domain"/>
</dbReference>
<dbReference type="InterPro" id="IPR013083">
    <property type="entry name" value="Znf_RING/FYVE/PHD"/>
</dbReference>
<dbReference type="PANTHER" id="PTHR45958">
    <property type="entry name" value="RING-TYPE E3 UBIQUITIN TRANSFERASE"/>
    <property type="match status" value="1"/>
</dbReference>
<dbReference type="PANTHER" id="PTHR45958:SF3">
    <property type="entry name" value="U-BOX DOMAIN-CONTAINING PROTEIN 24"/>
    <property type="match status" value="1"/>
</dbReference>
<dbReference type="Pfam" id="PF04564">
    <property type="entry name" value="U-box"/>
    <property type="match status" value="1"/>
</dbReference>
<dbReference type="SMART" id="SM00185">
    <property type="entry name" value="ARM"/>
    <property type="match status" value="9"/>
</dbReference>
<dbReference type="SMART" id="SM00504">
    <property type="entry name" value="Ubox"/>
    <property type="match status" value="1"/>
</dbReference>
<dbReference type="SUPFAM" id="SSF48371">
    <property type="entry name" value="ARM repeat"/>
    <property type="match status" value="2"/>
</dbReference>
<dbReference type="SUPFAM" id="SSF57850">
    <property type="entry name" value="RING/U-box"/>
    <property type="match status" value="1"/>
</dbReference>
<dbReference type="PROSITE" id="PS51698">
    <property type="entry name" value="U_BOX"/>
    <property type="match status" value="1"/>
</dbReference>
<comment type="function">
    <text evidence="3">E3 ubiquitin-protein ligase that functions as a negative regulator of brassinosteroid (BR) signaling (PubMed:30920691). Targets BZR1, a positive regulator of BR signaling pathway, and promotes its degradation via the ubiquitin-26S proteasome pathway (PubMed:30920691).</text>
</comment>
<comment type="catalytic activity">
    <reaction evidence="3">
        <text>S-ubiquitinyl-[E2 ubiquitin-conjugating enzyme]-L-cysteine + [acceptor protein]-L-lysine = [E2 ubiquitin-conjugating enzyme]-L-cysteine + N(6)-ubiquitinyl-[acceptor protein]-L-lysine.</text>
        <dbReference type="EC" id="2.3.2.27"/>
    </reaction>
</comment>
<comment type="pathway">
    <text evidence="5">Protein modification; protein ubiquitination.</text>
</comment>
<comment type="subunit">
    <text evidence="3">Interacts with BZR1, BZR2, BZR3 and GSK2.</text>
</comment>
<comment type="subcellular location">
    <subcellularLocation>
        <location evidence="3">Cytoplasm</location>
        <location evidence="3">Cytosol</location>
    </subcellularLocation>
    <subcellularLocation>
        <location evidence="3">Nucleus</location>
    </subcellularLocation>
</comment>
<comment type="PTM">
    <text evidence="3">Auto-ubiquitinated.</text>
</comment>
<comment type="PTM">
    <text evidence="3">Phosphorylated by GSK2 (PubMed:30920691). Phosphorylation of PUB24 increases its cellular stability (PubMed:30920691).</text>
</comment>
<comment type="disruption phenotype">
    <text evidence="3">Pleiotropic phenotypes, such as reduced height, enlarged lamina joint angles, increased tiller number, decreased panicle length and reduced primary branches per panicle, due to hypersensitivity to brassinosteroid.</text>
</comment>
<comment type="sequence caution" evidence="5">
    <conflict type="erroneous gene model prediction">
        <sequence resource="EMBL-CDS" id="AAP50990"/>
    </conflict>
</comment>
<sequence>MAGEGVEMSEEEGAFEAFVCPLTKQVMRDPVTIETGQTFEREAILKWFRECRDNGRRPTCPLTQRELRDTEVSPSVALRSVIHEWRARNEEKDLDRACASLVGGFAGHAGDEEEEESALRALVHVSQICQRSAASKDLVRRRGVLRAVAEMLKSGSRRLRLKSLQVLRVLVEDNDDNKEELGKGDTIRTIIKFLSNEHVQERELAVSLLHELSGHEPTCERIGAVYGAILLLVGMGSSKSESAVAVDKAESTLRNLDRFDANVKQMADNGRLQPLLTRLLRGEPDTRVAMADYLGELALANDDKAAVAEQAGPLLVGMLRTGATPAKEATLKALREISSSEASAKLLLQRAGVLPPLVNDVLFSTGHLPMKLKELAATILANLVASGADFRSIPLDDDEDDDGGGGGRGRRRTLLSEDVVHSQLHLISNTGPAIGCRLLSVLAGLTSSRATVADVVAAVKSSGATISLIQFIEAAHRDIRVESLKLLRNLAPYMGAELADALGGSLSSLLRAISSDGGGVTEEQAAAVGLLGDLPEGDSSLTRQLFDLGAFRALAPKLAELRRGTIRGGNRYVTPLTEGVVKVMYRVTCALEEDAEYVEFAREAGLAPLFVELLHTNGMDTVQLYSAMALEKLSLQSSHLTAIPAPPSPPAGFGCACLGRRPAAAAVPAGVCRVHGGFCSLRETFCLAQADGGKAVERLVACLDHLDGRVVEAALAALSTLVCDGVDAREGVVVLGEADGLRPVVDIMVESRTEALQRRAVWAVERILRVEEIAGEVAADQTVASALVEAYRNGDPRTRQTAERALRHLDRIPNFSAAFQSKRS</sequence>
<keyword id="KW-1070">Brassinosteroid signaling pathway</keyword>
<keyword id="KW-0963">Cytoplasm</keyword>
<keyword id="KW-0539">Nucleus</keyword>
<keyword id="KW-0597">Phosphoprotein</keyword>
<keyword id="KW-1185">Reference proteome</keyword>
<keyword id="KW-0677">Repeat</keyword>
<keyword id="KW-0808">Transferase</keyword>
<keyword id="KW-0832">Ubl conjugation</keyword>
<keyword id="KW-0833">Ubl conjugation pathway</keyword>
<feature type="chain" id="PRO_0000448266" description="U-box domain-containing protein 24">
    <location>
        <begin position="1"/>
        <end position="824"/>
    </location>
</feature>
<feature type="domain" description="U-box" evidence="2">
    <location>
        <begin position="13"/>
        <end position="92"/>
    </location>
</feature>
<feature type="repeat" description="ARM 1" evidence="1">
    <location>
        <begin position="133"/>
        <end position="172"/>
    </location>
</feature>
<feature type="repeat" description="ARM 2" evidence="1">
    <location>
        <begin position="175"/>
        <end position="214"/>
    </location>
</feature>
<feature type="repeat" description="ARM 3" evidence="1">
    <location>
        <begin position="217"/>
        <end position="258"/>
    </location>
</feature>
<feature type="repeat" description="ARM 4" evidence="1">
    <location>
        <begin position="260"/>
        <end position="299"/>
    </location>
</feature>
<feature type="repeat" description="ARM 5" evidence="1">
    <location>
        <begin position="300"/>
        <end position="339"/>
    </location>
</feature>
<feature type="repeat" description="ARM 6" evidence="1">
    <location>
        <begin position="341"/>
        <end position="385"/>
    </location>
</feature>
<feature type="repeat" description="ARM 7" evidence="1">
    <location>
        <begin position="396"/>
        <end position="435"/>
    </location>
</feature>
<feature type="repeat" description="ARM 8" evidence="1">
    <location>
        <begin position="441"/>
        <end position="481"/>
    </location>
</feature>
<feature type="repeat" description="ARM 9" evidence="1">
    <location>
        <begin position="486"/>
        <end position="525"/>
    </location>
</feature>
<feature type="mutagenesis site" description="Loss of E3 ubiquitin-protein ligase activity." evidence="3">
    <original>C</original>
    <variation>Y</variation>
    <location>
        <position position="20"/>
    </location>
</feature>
<protein>
    <recommendedName>
        <fullName evidence="5">U-box domain-containing protein 24</fullName>
        <ecNumber evidence="3">2.3.2.27</ecNumber>
    </recommendedName>
    <alternativeName>
        <fullName evidence="4">Plant U-box protein 24</fullName>
        <shortName evidence="4">OsPUB24</shortName>
    </alternativeName>
    <alternativeName>
        <fullName evidence="5">RING-type E3 ubiquitin transferase PUB24</fullName>
    </alternativeName>
</protein>